<organism>
    <name type="scientific">Shigella flexneri</name>
    <dbReference type="NCBI Taxonomy" id="623"/>
    <lineage>
        <taxon>Bacteria</taxon>
        <taxon>Pseudomonadati</taxon>
        <taxon>Pseudomonadota</taxon>
        <taxon>Gammaproteobacteria</taxon>
        <taxon>Enterobacterales</taxon>
        <taxon>Enterobacteriaceae</taxon>
        <taxon>Shigella</taxon>
    </lineage>
</organism>
<keyword id="KW-0030">Aminoacyl-tRNA synthetase</keyword>
<keyword id="KW-0067">ATP-binding</keyword>
<keyword id="KW-0963">Cytoplasm</keyword>
<keyword id="KW-0436">Ligase</keyword>
<keyword id="KW-0547">Nucleotide-binding</keyword>
<keyword id="KW-0648">Protein biosynthesis</keyword>
<keyword id="KW-1185">Reference proteome</keyword>
<protein>
    <recommendedName>
        <fullName evidence="1">Tryptophan--tRNA ligase</fullName>
        <ecNumber evidence="1">6.1.1.2</ecNumber>
    </recommendedName>
    <alternativeName>
        <fullName evidence="1">Tryptophanyl-tRNA synthetase</fullName>
        <shortName evidence="1">TrpRS</shortName>
    </alternativeName>
</protein>
<dbReference type="EC" id="6.1.1.2" evidence="1"/>
<dbReference type="EMBL" id="AE005674">
    <property type="protein sequence ID" value="AAN44864.1"/>
    <property type="molecule type" value="Genomic_DNA"/>
</dbReference>
<dbReference type="EMBL" id="AE014073">
    <property type="protein sequence ID" value="AAP19314.1"/>
    <property type="molecule type" value="Genomic_DNA"/>
</dbReference>
<dbReference type="RefSeq" id="NP_709157.1">
    <property type="nucleotide sequence ID" value="NC_004337.2"/>
</dbReference>
<dbReference type="RefSeq" id="WP_000165556.1">
    <property type="nucleotide sequence ID" value="NZ_WPGW01000003.1"/>
</dbReference>
<dbReference type="SMR" id="Q83JA5"/>
<dbReference type="STRING" id="198214.SF3402"/>
<dbReference type="PaxDb" id="198214-SF3402"/>
<dbReference type="GeneID" id="1027582"/>
<dbReference type="KEGG" id="sfl:SF3402"/>
<dbReference type="KEGG" id="sfx:S4360"/>
<dbReference type="PATRIC" id="fig|198214.7.peg.4016"/>
<dbReference type="HOGENOM" id="CLU_029244_1_2_6"/>
<dbReference type="Proteomes" id="UP000001006">
    <property type="component" value="Chromosome"/>
</dbReference>
<dbReference type="Proteomes" id="UP000002673">
    <property type="component" value="Chromosome"/>
</dbReference>
<dbReference type="GO" id="GO:0005829">
    <property type="term" value="C:cytosol"/>
    <property type="evidence" value="ECO:0007669"/>
    <property type="project" value="TreeGrafter"/>
</dbReference>
<dbReference type="GO" id="GO:0005524">
    <property type="term" value="F:ATP binding"/>
    <property type="evidence" value="ECO:0007669"/>
    <property type="project" value="UniProtKB-UniRule"/>
</dbReference>
<dbReference type="GO" id="GO:0004830">
    <property type="term" value="F:tryptophan-tRNA ligase activity"/>
    <property type="evidence" value="ECO:0007669"/>
    <property type="project" value="UniProtKB-UniRule"/>
</dbReference>
<dbReference type="GO" id="GO:0006436">
    <property type="term" value="P:tryptophanyl-tRNA aminoacylation"/>
    <property type="evidence" value="ECO:0007669"/>
    <property type="project" value="UniProtKB-UniRule"/>
</dbReference>
<dbReference type="CDD" id="cd00806">
    <property type="entry name" value="TrpRS_core"/>
    <property type="match status" value="1"/>
</dbReference>
<dbReference type="FunFam" id="1.10.240.10:FF:000002">
    <property type="entry name" value="Tryptophan--tRNA ligase"/>
    <property type="match status" value="1"/>
</dbReference>
<dbReference type="FunFam" id="3.40.50.620:FF:000024">
    <property type="entry name" value="Tryptophan--tRNA ligase"/>
    <property type="match status" value="1"/>
</dbReference>
<dbReference type="Gene3D" id="3.40.50.620">
    <property type="entry name" value="HUPs"/>
    <property type="match status" value="1"/>
</dbReference>
<dbReference type="Gene3D" id="1.10.240.10">
    <property type="entry name" value="Tyrosyl-Transfer RNA Synthetase"/>
    <property type="match status" value="1"/>
</dbReference>
<dbReference type="HAMAP" id="MF_00140_B">
    <property type="entry name" value="Trp_tRNA_synth_B"/>
    <property type="match status" value="1"/>
</dbReference>
<dbReference type="InterPro" id="IPR001412">
    <property type="entry name" value="aa-tRNA-synth_I_CS"/>
</dbReference>
<dbReference type="InterPro" id="IPR002305">
    <property type="entry name" value="aa-tRNA-synth_Ic"/>
</dbReference>
<dbReference type="InterPro" id="IPR014729">
    <property type="entry name" value="Rossmann-like_a/b/a_fold"/>
</dbReference>
<dbReference type="InterPro" id="IPR002306">
    <property type="entry name" value="Trp-tRNA-ligase"/>
</dbReference>
<dbReference type="InterPro" id="IPR024109">
    <property type="entry name" value="Trp-tRNA-ligase_bac-type"/>
</dbReference>
<dbReference type="InterPro" id="IPR050203">
    <property type="entry name" value="Trp-tRNA_synthetase"/>
</dbReference>
<dbReference type="NCBIfam" id="TIGR00233">
    <property type="entry name" value="trpS"/>
    <property type="match status" value="1"/>
</dbReference>
<dbReference type="PANTHER" id="PTHR43766">
    <property type="entry name" value="TRYPTOPHAN--TRNA LIGASE, MITOCHONDRIAL"/>
    <property type="match status" value="1"/>
</dbReference>
<dbReference type="PANTHER" id="PTHR43766:SF1">
    <property type="entry name" value="TRYPTOPHAN--TRNA LIGASE, MITOCHONDRIAL"/>
    <property type="match status" value="1"/>
</dbReference>
<dbReference type="Pfam" id="PF00579">
    <property type="entry name" value="tRNA-synt_1b"/>
    <property type="match status" value="1"/>
</dbReference>
<dbReference type="PRINTS" id="PR01039">
    <property type="entry name" value="TRNASYNTHTRP"/>
</dbReference>
<dbReference type="SUPFAM" id="SSF52374">
    <property type="entry name" value="Nucleotidylyl transferase"/>
    <property type="match status" value="1"/>
</dbReference>
<dbReference type="PROSITE" id="PS00178">
    <property type="entry name" value="AA_TRNA_LIGASE_I"/>
    <property type="match status" value="1"/>
</dbReference>
<comment type="function">
    <text evidence="1">Catalyzes the attachment of tryptophan to tRNA(Trp).</text>
</comment>
<comment type="catalytic activity">
    <reaction evidence="1">
        <text>tRNA(Trp) + L-tryptophan + ATP = L-tryptophyl-tRNA(Trp) + AMP + diphosphate + H(+)</text>
        <dbReference type="Rhea" id="RHEA:24080"/>
        <dbReference type="Rhea" id="RHEA-COMP:9671"/>
        <dbReference type="Rhea" id="RHEA-COMP:9705"/>
        <dbReference type="ChEBI" id="CHEBI:15378"/>
        <dbReference type="ChEBI" id="CHEBI:30616"/>
        <dbReference type="ChEBI" id="CHEBI:33019"/>
        <dbReference type="ChEBI" id="CHEBI:57912"/>
        <dbReference type="ChEBI" id="CHEBI:78442"/>
        <dbReference type="ChEBI" id="CHEBI:78535"/>
        <dbReference type="ChEBI" id="CHEBI:456215"/>
        <dbReference type="EC" id="6.1.1.2"/>
    </reaction>
</comment>
<comment type="subunit">
    <text evidence="1">Homodimer.</text>
</comment>
<comment type="subcellular location">
    <subcellularLocation>
        <location evidence="1">Cytoplasm</location>
    </subcellularLocation>
</comment>
<comment type="similarity">
    <text evidence="1">Belongs to the class-I aminoacyl-tRNA synthetase family.</text>
</comment>
<feature type="chain" id="PRO_0000136674" description="Tryptophan--tRNA ligase">
    <location>
        <begin position="1"/>
        <end position="334"/>
    </location>
</feature>
<feature type="short sequence motif" description="'HIGH' region" evidence="1">
    <location>
        <begin position="12"/>
        <end position="20"/>
    </location>
</feature>
<feature type="short sequence motif" description="'KMSKS' region" evidence="1">
    <location>
        <begin position="195"/>
        <end position="199"/>
    </location>
</feature>
<feature type="binding site" evidence="1">
    <location>
        <begin position="11"/>
        <end position="13"/>
    </location>
    <ligand>
        <name>ATP</name>
        <dbReference type="ChEBI" id="CHEBI:30616"/>
    </ligand>
</feature>
<feature type="binding site" evidence="1">
    <location>
        <begin position="19"/>
        <end position="20"/>
    </location>
    <ligand>
        <name>ATP</name>
        <dbReference type="ChEBI" id="CHEBI:30616"/>
    </ligand>
</feature>
<feature type="binding site" evidence="1">
    <location>
        <position position="135"/>
    </location>
    <ligand>
        <name>L-tryptophan</name>
        <dbReference type="ChEBI" id="CHEBI:57912"/>
    </ligand>
</feature>
<feature type="binding site" evidence="1">
    <location>
        <begin position="147"/>
        <end position="149"/>
    </location>
    <ligand>
        <name>ATP</name>
        <dbReference type="ChEBI" id="CHEBI:30616"/>
    </ligand>
</feature>
<feature type="binding site" evidence="1">
    <location>
        <position position="186"/>
    </location>
    <ligand>
        <name>ATP</name>
        <dbReference type="ChEBI" id="CHEBI:30616"/>
    </ligand>
</feature>
<feature type="binding site" evidence="1">
    <location>
        <begin position="195"/>
        <end position="199"/>
    </location>
    <ligand>
        <name>ATP</name>
        <dbReference type="ChEBI" id="CHEBI:30616"/>
    </ligand>
</feature>
<gene>
    <name evidence="1" type="primary">trpS</name>
    <name type="ordered locus">SF3402</name>
    <name type="ordered locus">S4360</name>
</gene>
<proteinExistence type="inferred from homology"/>
<sequence length="334" mass="37408">MTKPIVFSGAQPSGELTIGNYMGALRQWVNMQDDYHCIYCIVDQHAITVRQDAQKLRKATLDTLALYLACGIDPEKSTIFVQSHVPEHAQLGWALNCYTYFGELSRMTQFKDKSARYAENINAGLFGYPVLMAADILLYQTNLVPVGEDQKQHLELSRDIAQRFNALYGEIFKVPEPFIPKSGARVMSLLEPTKKMSKSDDNRNNVIGLLEDPKSVVKKIKRAVTDSDEPPVVRYDVQNKAGVSNLLDILSAVTGQSIPELEKQFEGKMYGHLKGEVADAVSGMLTELQERYHRFRNDEAFLQQVMKDGAEKASVHASRTLKAVYEAIGFVAKP</sequence>
<name>SYW_SHIFL</name>
<reference key="1">
    <citation type="journal article" date="2002" name="Nucleic Acids Res.">
        <title>Genome sequence of Shigella flexneri 2a: insights into pathogenicity through comparison with genomes of Escherichia coli K12 and O157.</title>
        <authorList>
            <person name="Jin Q."/>
            <person name="Yuan Z."/>
            <person name="Xu J."/>
            <person name="Wang Y."/>
            <person name="Shen Y."/>
            <person name="Lu W."/>
            <person name="Wang J."/>
            <person name="Liu H."/>
            <person name="Yang J."/>
            <person name="Yang F."/>
            <person name="Zhang X."/>
            <person name="Zhang J."/>
            <person name="Yang G."/>
            <person name="Wu H."/>
            <person name="Qu D."/>
            <person name="Dong J."/>
            <person name="Sun L."/>
            <person name="Xue Y."/>
            <person name="Zhao A."/>
            <person name="Gao Y."/>
            <person name="Zhu J."/>
            <person name="Kan B."/>
            <person name="Ding K."/>
            <person name="Chen S."/>
            <person name="Cheng H."/>
            <person name="Yao Z."/>
            <person name="He B."/>
            <person name="Chen R."/>
            <person name="Ma D."/>
            <person name="Qiang B."/>
            <person name="Wen Y."/>
            <person name="Hou Y."/>
            <person name="Yu J."/>
        </authorList>
    </citation>
    <scope>NUCLEOTIDE SEQUENCE [LARGE SCALE GENOMIC DNA]</scope>
    <source>
        <strain>301 / Serotype 2a</strain>
    </source>
</reference>
<reference key="2">
    <citation type="journal article" date="2003" name="Infect. Immun.">
        <title>Complete genome sequence and comparative genomics of Shigella flexneri serotype 2a strain 2457T.</title>
        <authorList>
            <person name="Wei J."/>
            <person name="Goldberg M.B."/>
            <person name="Burland V."/>
            <person name="Venkatesan M.M."/>
            <person name="Deng W."/>
            <person name="Fournier G."/>
            <person name="Mayhew G.F."/>
            <person name="Plunkett G. III"/>
            <person name="Rose D.J."/>
            <person name="Darling A."/>
            <person name="Mau B."/>
            <person name="Perna N.T."/>
            <person name="Payne S.M."/>
            <person name="Runyen-Janecky L.J."/>
            <person name="Zhou S."/>
            <person name="Schwartz D.C."/>
            <person name="Blattner F.R."/>
        </authorList>
    </citation>
    <scope>NUCLEOTIDE SEQUENCE [LARGE SCALE GENOMIC DNA]</scope>
    <source>
        <strain>ATCC 700930 / 2457T / Serotype 2a</strain>
    </source>
</reference>
<evidence type="ECO:0000255" key="1">
    <source>
        <dbReference type="HAMAP-Rule" id="MF_00140"/>
    </source>
</evidence>
<accession>Q83JA5</accession>